<keyword id="KW-0028">Amino-acid biosynthesis</keyword>
<keyword id="KW-0963">Cytoplasm</keyword>
<keyword id="KW-0368">Histidine biosynthesis</keyword>
<keyword id="KW-0456">Lyase</keyword>
<accession>A7ZEG5</accession>
<name>HIS7_CAMC1</name>
<feature type="chain" id="PRO_0000336299" description="Imidazoleglycerol-phosphate dehydratase">
    <location>
        <begin position="1"/>
        <end position="195"/>
    </location>
</feature>
<gene>
    <name evidence="1" type="primary">hisB</name>
    <name type="ordered locus">Ccon26_13240</name>
    <name type="ORF">CCC13826_1989</name>
</gene>
<evidence type="ECO:0000255" key="1">
    <source>
        <dbReference type="HAMAP-Rule" id="MF_00076"/>
    </source>
</evidence>
<sequence>MREEILELTRNTKETQISMKLKIYGSGVAKISTGIGFFDHMLEAFTKHSLLDLEISCKGDTHVDFHHSVEDVGIVLGQLLNEALYPLSGVERFGEASVVMDEAAVFCALDLSNRAYLVYENFNENAKVGEFDTELVEEFFRAVAINSAITLHLNQIRGKNTHHIIEATFKSFAVALRRALAKNARIGTPSTKGVL</sequence>
<reference key="1">
    <citation type="submission" date="2007-10" db="EMBL/GenBank/DDBJ databases">
        <title>Genome sequence of Campylobacter concisus 13826 isolated from human feces.</title>
        <authorList>
            <person name="Fouts D.E."/>
            <person name="Mongodin E.F."/>
            <person name="Puiu D."/>
            <person name="Sebastian Y."/>
            <person name="Miller W.G."/>
            <person name="Mandrell R.E."/>
            <person name="On S."/>
            <person name="Nelson K.E."/>
        </authorList>
    </citation>
    <scope>NUCLEOTIDE SEQUENCE [LARGE SCALE GENOMIC DNA]</scope>
    <source>
        <strain>13826</strain>
    </source>
</reference>
<comment type="catalytic activity">
    <reaction evidence="1">
        <text>D-erythro-1-(imidazol-4-yl)glycerol 3-phosphate = 3-(imidazol-4-yl)-2-oxopropyl phosphate + H2O</text>
        <dbReference type="Rhea" id="RHEA:11040"/>
        <dbReference type="ChEBI" id="CHEBI:15377"/>
        <dbReference type="ChEBI" id="CHEBI:57766"/>
        <dbReference type="ChEBI" id="CHEBI:58278"/>
        <dbReference type="EC" id="4.2.1.19"/>
    </reaction>
</comment>
<comment type="pathway">
    <text evidence="1">Amino-acid biosynthesis; L-histidine biosynthesis; L-histidine from 5-phospho-alpha-D-ribose 1-diphosphate: step 6/9.</text>
</comment>
<comment type="subcellular location">
    <subcellularLocation>
        <location evidence="1">Cytoplasm</location>
    </subcellularLocation>
</comment>
<comment type="similarity">
    <text evidence="1">Belongs to the imidazoleglycerol-phosphate dehydratase family.</text>
</comment>
<protein>
    <recommendedName>
        <fullName evidence="1">Imidazoleglycerol-phosphate dehydratase</fullName>
        <shortName evidence="1">IGPD</shortName>
        <ecNumber evidence="1">4.2.1.19</ecNumber>
    </recommendedName>
</protein>
<dbReference type="EC" id="4.2.1.19" evidence="1"/>
<dbReference type="EMBL" id="CP000792">
    <property type="protein sequence ID" value="EAT98743.1"/>
    <property type="molecule type" value="Genomic_DNA"/>
</dbReference>
<dbReference type="SMR" id="A7ZEG5"/>
<dbReference type="STRING" id="360104.CCC13826_1989"/>
<dbReference type="KEGG" id="cco:CCC13826_1989"/>
<dbReference type="eggNOG" id="COG0131">
    <property type="taxonomic scope" value="Bacteria"/>
</dbReference>
<dbReference type="HOGENOM" id="CLU_044308_3_0_7"/>
<dbReference type="OrthoDB" id="9790411at2"/>
<dbReference type="UniPathway" id="UPA00031">
    <property type="reaction ID" value="UER00011"/>
</dbReference>
<dbReference type="Proteomes" id="UP000001121">
    <property type="component" value="Chromosome"/>
</dbReference>
<dbReference type="GO" id="GO:0005737">
    <property type="term" value="C:cytoplasm"/>
    <property type="evidence" value="ECO:0007669"/>
    <property type="project" value="UniProtKB-SubCell"/>
</dbReference>
<dbReference type="GO" id="GO:0004424">
    <property type="term" value="F:imidazoleglycerol-phosphate dehydratase activity"/>
    <property type="evidence" value="ECO:0007669"/>
    <property type="project" value="UniProtKB-UniRule"/>
</dbReference>
<dbReference type="GO" id="GO:0000105">
    <property type="term" value="P:L-histidine biosynthetic process"/>
    <property type="evidence" value="ECO:0007669"/>
    <property type="project" value="UniProtKB-UniRule"/>
</dbReference>
<dbReference type="CDD" id="cd07914">
    <property type="entry name" value="IGPD"/>
    <property type="match status" value="1"/>
</dbReference>
<dbReference type="FunFam" id="3.30.230.40:FF:000001">
    <property type="entry name" value="Imidazoleglycerol-phosphate dehydratase HisB"/>
    <property type="match status" value="1"/>
</dbReference>
<dbReference type="FunFam" id="3.30.230.40:FF:000003">
    <property type="entry name" value="Imidazoleglycerol-phosphate dehydratase HisB"/>
    <property type="match status" value="1"/>
</dbReference>
<dbReference type="Gene3D" id="3.30.230.40">
    <property type="entry name" value="Imidazole glycerol phosphate dehydratase, domain 1"/>
    <property type="match status" value="2"/>
</dbReference>
<dbReference type="HAMAP" id="MF_00076">
    <property type="entry name" value="HisB"/>
    <property type="match status" value="1"/>
</dbReference>
<dbReference type="InterPro" id="IPR038494">
    <property type="entry name" value="IGPD_sf"/>
</dbReference>
<dbReference type="InterPro" id="IPR000807">
    <property type="entry name" value="ImidazoleglycerolP_deHydtase"/>
</dbReference>
<dbReference type="InterPro" id="IPR020565">
    <property type="entry name" value="ImidazoleglycerP_deHydtase_CS"/>
</dbReference>
<dbReference type="InterPro" id="IPR020568">
    <property type="entry name" value="Ribosomal_Su5_D2-typ_SF"/>
</dbReference>
<dbReference type="NCBIfam" id="NF002111">
    <property type="entry name" value="PRK00951.2-1"/>
    <property type="match status" value="1"/>
</dbReference>
<dbReference type="NCBIfam" id="NF002114">
    <property type="entry name" value="PRK00951.2-4"/>
    <property type="match status" value="1"/>
</dbReference>
<dbReference type="PANTHER" id="PTHR23133:SF2">
    <property type="entry name" value="IMIDAZOLEGLYCEROL-PHOSPHATE DEHYDRATASE"/>
    <property type="match status" value="1"/>
</dbReference>
<dbReference type="PANTHER" id="PTHR23133">
    <property type="entry name" value="IMIDAZOLEGLYCEROL-PHOSPHATE DEHYDRATASE HIS7"/>
    <property type="match status" value="1"/>
</dbReference>
<dbReference type="Pfam" id="PF00475">
    <property type="entry name" value="IGPD"/>
    <property type="match status" value="1"/>
</dbReference>
<dbReference type="SUPFAM" id="SSF54211">
    <property type="entry name" value="Ribosomal protein S5 domain 2-like"/>
    <property type="match status" value="2"/>
</dbReference>
<dbReference type="PROSITE" id="PS00954">
    <property type="entry name" value="IGP_DEHYDRATASE_1"/>
    <property type="match status" value="1"/>
</dbReference>
<dbReference type="PROSITE" id="PS00955">
    <property type="entry name" value="IGP_DEHYDRATASE_2"/>
    <property type="match status" value="1"/>
</dbReference>
<proteinExistence type="inferred from homology"/>
<organism>
    <name type="scientific">Campylobacter concisus (strain 13826)</name>
    <dbReference type="NCBI Taxonomy" id="360104"/>
    <lineage>
        <taxon>Bacteria</taxon>
        <taxon>Pseudomonadati</taxon>
        <taxon>Campylobacterota</taxon>
        <taxon>Epsilonproteobacteria</taxon>
        <taxon>Campylobacterales</taxon>
        <taxon>Campylobacteraceae</taxon>
        <taxon>Campylobacter</taxon>
    </lineage>
</organism>